<evidence type="ECO:0000255" key="1">
    <source>
        <dbReference type="HAMAP-Rule" id="MF_01569"/>
    </source>
</evidence>
<name>SYP_SALG2</name>
<gene>
    <name evidence="1" type="primary">proS</name>
    <name type="ordered locus">SG0246</name>
</gene>
<comment type="function">
    <text evidence="1">Catalyzes the attachment of proline to tRNA(Pro) in a two-step reaction: proline is first activated by ATP to form Pro-AMP and then transferred to the acceptor end of tRNA(Pro). As ProRS can inadvertently accommodate and process non-cognate amino acids such as alanine and cysteine, to avoid such errors it has two additional distinct editing activities against alanine. One activity is designated as 'pretransfer' editing and involves the tRNA(Pro)-independent hydrolysis of activated Ala-AMP. The other activity is designated 'posttransfer' editing and involves deacylation of mischarged Ala-tRNA(Pro). The misacylated Cys-tRNA(Pro) is not edited by ProRS.</text>
</comment>
<comment type="catalytic activity">
    <reaction evidence="1">
        <text>tRNA(Pro) + L-proline + ATP = L-prolyl-tRNA(Pro) + AMP + diphosphate</text>
        <dbReference type="Rhea" id="RHEA:14305"/>
        <dbReference type="Rhea" id="RHEA-COMP:9700"/>
        <dbReference type="Rhea" id="RHEA-COMP:9702"/>
        <dbReference type="ChEBI" id="CHEBI:30616"/>
        <dbReference type="ChEBI" id="CHEBI:33019"/>
        <dbReference type="ChEBI" id="CHEBI:60039"/>
        <dbReference type="ChEBI" id="CHEBI:78442"/>
        <dbReference type="ChEBI" id="CHEBI:78532"/>
        <dbReference type="ChEBI" id="CHEBI:456215"/>
        <dbReference type="EC" id="6.1.1.15"/>
    </reaction>
</comment>
<comment type="subunit">
    <text evidence="1">Homodimer.</text>
</comment>
<comment type="subcellular location">
    <subcellularLocation>
        <location evidence="1">Cytoplasm</location>
    </subcellularLocation>
</comment>
<comment type="domain">
    <text evidence="1">Consists of three domains: the N-terminal catalytic domain, the editing domain and the C-terminal anticodon-binding domain.</text>
</comment>
<comment type="similarity">
    <text evidence="1">Belongs to the class-II aminoacyl-tRNA synthetase family. ProS type 1 subfamily.</text>
</comment>
<accession>B5R5J8</accession>
<organism>
    <name type="scientific">Salmonella gallinarum (strain 287/91 / NCTC 13346)</name>
    <dbReference type="NCBI Taxonomy" id="550538"/>
    <lineage>
        <taxon>Bacteria</taxon>
        <taxon>Pseudomonadati</taxon>
        <taxon>Pseudomonadota</taxon>
        <taxon>Gammaproteobacteria</taxon>
        <taxon>Enterobacterales</taxon>
        <taxon>Enterobacteriaceae</taxon>
        <taxon>Salmonella</taxon>
    </lineage>
</organism>
<sequence length="572" mass="63540">MRTSQYLLSTLKETPADAEVISHQLMLRAGMIRKLASGLYTWLPTGLRVLKKVENIVREEMNNAGAIEVSMPVVQPADLWQESGRWEQYGPELLRFVDRGERPFVLGPTHEEVITDLVRNELSSYKQLPLNFFQIQTKFRDEVRPRFGVMRSREFLMKDAYSFHTSQESLQETYDAMYAAYSRIFSRMGLDFRAVQADTGSIGGNASHEFQVLAQSGEDDIVFSDVSDYAANIELAEAIAPQTPRAAATQEMTLVDTPNAKTIAELVEQFNLPIEKTVKTLLVKAVKDSKSPLVALLVRGDHELNEVKAEKLPHVASPLTFATEEEIRAVINAGPGSLGPVNMPIPVIIDRTVAAMSDFAAGANIDGKHYFGINWDRDVATPVVADIRNVVAGDPSPDGQGTLLIKRGIEVGHIFQLGTKYSEALKASVQGEDGRNQILTMGCYGIGVTRVVAAAIEQNFDERGIVWPDAIAPFQVAILPMNMHKSFRVQELAEKLYSELRAQGIEVLMDDRKERPGVMFADMELIGIPHTIVIGDRNLDNDDIEYKYRRSGEKSLIKTGDIVDYLVKAIKG</sequence>
<feature type="chain" id="PRO_1000199417" description="Proline--tRNA ligase">
    <location>
        <begin position="1"/>
        <end position="572"/>
    </location>
</feature>
<proteinExistence type="inferred from homology"/>
<protein>
    <recommendedName>
        <fullName evidence="1">Proline--tRNA ligase</fullName>
        <ecNumber evidence="1">6.1.1.15</ecNumber>
    </recommendedName>
    <alternativeName>
        <fullName evidence="1">Prolyl-tRNA synthetase</fullName>
        <shortName evidence="1">ProRS</shortName>
    </alternativeName>
</protein>
<reference key="1">
    <citation type="journal article" date="2008" name="Genome Res.">
        <title>Comparative genome analysis of Salmonella enteritidis PT4 and Salmonella gallinarum 287/91 provides insights into evolutionary and host adaptation pathways.</title>
        <authorList>
            <person name="Thomson N.R."/>
            <person name="Clayton D.J."/>
            <person name="Windhorst D."/>
            <person name="Vernikos G."/>
            <person name="Davidson S."/>
            <person name="Churcher C."/>
            <person name="Quail M.A."/>
            <person name="Stevens M."/>
            <person name="Jones M.A."/>
            <person name="Watson M."/>
            <person name="Barron A."/>
            <person name="Layton A."/>
            <person name="Pickard D."/>
            <person name="Kingsley R.A."/>
            <person name="Bignell A."/>
            <person name="Clark L."/>
            <person name="Harris B."/>
            <person name="Ormond D."/>
            <person name="Abdellah Z."/>
            <person name="Brooks K."/>
            <person name="Cherevach I."/>
            <person name="Chillingworth T."/>
            <person name="Woodward J."/>
            <person name="Norberczak H."/>
            <person name="Lord A."/>
            <person name="Arrowsmith C."/>
            <person name="Jagels K."/>
            <person name="Moule S."/>
            <person name="Mungall K."/>
            <person name="Saunders M."/>
            <person name="Whitehead S."/>
            <person name="Chabalgoity J.A."/>
            <person name="Maskell D."/>
            <person name="Humphreys T."/>
            <person name="Roberts M."/>
            <person name="Barrow P.A."/>
            <person name="Dougan G."/>
            <person name="Parkhill J."/>
        </authorList>
    </citation>
    <scope>NUCLEOTIDE SEQUENCE [LARGE SCALE GENOMIC DNA]</scope>
    <source>
        <strain>287/91 / NCTC 13346</strain>
    </source>
</reference>
<keyword id="KW-0030">Aminoacyl-tRNA synthetase</keyword>
<keyword id="KW-0067">ATP-binding</keyword>
<keyword id="KW-0963">Cytoplasm</keyword>
<keyword id="KW-0436">Ligase</keyword>
<keyword id="KW-0547">Nucleotide-binding</keyword>
<keyword id="KW-0648">Protein biosynthesis</keyword>
<dbReference type="EC" id="6.1.1.15" evidence="1"/>
<dbReference type="EMBL" id="AM933173">
    <property type="protein sequence ID" value="CAR36153.1"/>
    <property type="molecule type" value="Genomic_DNA"/>
</dbReference>
<dbReference type="RefSeq" id="WP_001260683.1">
    <property type="nucleotide sequence ID" value="NC_011274.1"/>
</dbReference>
<dbReference type="SMR" id="B5R5J8"/>
<dbReference type="KEGG" id="seg:SG0246"/>
<dbReference type="HOGENOM" id="CLU_016739_0_0_6"/>
<dbReference type="Proteomes" id="UP000008321">
    <property type="component" value="Chromosome"/>
</dbReference>
<dbReference type="GO" id="GO:0005829">
    <property type="term" value="C:cytosol"/>
    <property type="evidence" value="ECO:0007669"/>
    <property type="project" value="TreeGrafter"/>
</dbReference>
<dbReference type="GO" id="GO:0002161">
    <property type="term" value="F:aminoacyl-tRNA deacylase activity"/>
    <property type="evidence" value="ECO:0007669"/>
    <property type="project" value="InterPro"/>
</dbReference>
<dbReference type="GO" id="GO:0005524">
    <property type="term" value="F:ATP binding"/>
    <property type="evidence" value="ECO:0007669"/>
    <property type="project" value="UniProtKB-UniRule"/>
</dbReference>
<dbReference type="GO" id="GO:0004827">
    <property type="term" value="F:proline-tRNA ligase activity"/>
    <property type="evidence" value="ECO:0007669"/>
    <property type="project" value="UniProtKB-UniRule"/>
</dbReference>
<dbReference type="GO" id="GO:0006433">
    <property type="term" value="P:prolyl-tRNA aminoacylation"/>
    <property type="evidence" value="ECO:0007669"/>
    <property type="project" value="UniProtKB-UniRule"/>
</dbReference>
<dbReference type="CDD" id="cd04334">
    <property type="entry name" value="ProRS-INS"/>
    <property type="match status" value="1"/>
</dbReference>
<dbReference type="CDD" id="cd00861">
    <property type="entry name" value="ProRS_anticodon_short"/>
    <property type="match status" value="1"/>
</dbReference>
<dbReference type="CDD" id="cd00779">
    <property type="entry name" value="ProRS_core_prok"/>
    <property type="match status" value="1"/>
</dbReference>
<dbReference type="FunFam" id="3.30.930.10:FF:000012">
    <property type="entry name" value="Proline--tRNA ligase"/>
    <property type="match status" value="1"/>
</dbReference>
<dbReference type="FunFam" id="3.30.930.10:FF:000097">
    <property type="entry name" value="Proline--tRNA ligase"/>
    <property type="match status" value="1"/>
</dbReference>
<dbReference type="FunFam" id="3.40.50.800:FF:000006">
    <property type="entry name" value="Proline--tRNA ligase"/>
    <property type="match status" value="1"/>
</dbReference>
<dbReference type="FunFam" id="3.90.960.10:FF:000001">
    <property type="entry name" value="Proline--tRNA ligase"/>
    <property type="match status" value="1"/>
</dbReference>
<dbReference type="Gene3D" id="3.40.50.800">
    <property type="entry name" value="Anticodon-binding domain"/>
    <property type="match status" value="1"/>
</dbReference>
<dbReference type="Gene3D" id="3.30.930.10">
    <property type="entry name" value="Bira Bifunctional Protein, Domain 2"/>
    <property type="match status" value="2"/>
</dbReference>
<dbReference type="Gene3D" id="3.90.960.10">
    <property type="entry name" value="YbaK/aminoacyl-tRNA synthetase-associated domain"/>
    <property type="match status" value="1"/>
</dbReference>
<dbReference type="HAMAP" id="MF_01569">
    <property type="entry name" value="Pro_tRNA_synth_type1"/>
    <property type="match status" value="1"/>
</dbReference>
<dbReference type="InterPro" id="IPR002314">
    <property type="entry name" value="aa-tRNA-synt_IIb"/>
</dbReference>
<dbReference type="InterPro" id="IPR006195">
    <property type="entry name" value="aa-tRNA-synth_II"/>
</dbReference>
<dbReference type="InterPro" id="IPR045864">
    <property type="entry name" value="aa-tRNA-synth_II/BPL/LPL"/>
</dbReference>
<dbReference type="InterPro" id="IPR004154">
    <property type="entry name" value="Anticodon-bd"/>
</dbReference>
<dbReference type="InterPro" id="IPR036621">
    <property type="entry name" value="Anticodon-bd_dom_sf"/>
</dbReference>
<dbReference type="InterPro" id="IPR002316">
    <property type="entry name" value="Pro-tRNA-ligase_IIa"/>
</dbReference>
<dbReference type="InterPro" id="IPR004500">
    <property type="entry name" value="Pro-tRNA-synth_IIa_bac-type"/>
</dbReference>
<dbReference type="InterPro" id="IPR023717">
    <property type="entry name" value="Pro-tRNA-Synthase_IIa_type1"/>
</dbReference>
<dbReference type="InterPro" id="IPR050062">
    <property type="entry name" value="Pro-tRNA_synthetase"/>
</dbReference>
<dbReference type="InterPro" id="IPR044140">
    <property type="entry name" value="ProRS_anticodon_short"/>
</dbReference>
<dbReference type="InterPro" id="IPR033730">
    <property type="entry name" value="ProRS_core_prok"/>
</dbReference>
<dbReference type="InterPro" id="IPR036754">
    <property type="entry name" value="YbaK/aa-tRNA-synt-asso_dom_sf"/>
</dbReference>
<dbReference type="InterPro" id="IPR007214">
    <property type="entry name" value="YbaK/aa-tRNA-synth-assoc-dom"/>
</dbReference>
<dbReference type="NCBIfam" id="NF006625">
    <property type="entry name" value="PRK09194.1"/>
    <property type="match status" value="1"/>
</dbReference>
<dbReference type="NCBIfam" id="TIGR00409">
    <property type="entry name" value="proS_fam_II"/>
    <property type="match status" value="1"/>
</dbReference>
<dbReference type="PANTHER" id="PTHR42753">
    <property type="entry name" value="MITOCHONDRIAL RIBOSOME PROTEIN L39/PROLYL-TRNA LIGASE FAMILY MEMBER"/>
    <property type="match status" value="1"/>
</dbReference>
<dbReference type="PANTHER" id="PTHR42753:SF2">
    <property type="entry name" value="PROLINE--TRNA LIGASE"/>
    <property type="match status" value="1"/>
</dbReference>
<dbReference type="Pfam" id="PF03129">
    <property type="entry name" value="HGTP_anticodon"/>
    <property type="match status" value="1"/>
</dbReference>
<dbReference type="Pfam" id="PF00587">
    <property type="entry name" value="tRNA-synt_2b"/>
    <property type="match status" value="1"/>
</dbReference>
<dbReference type="Pfam" id="PF04073">
    <property type="entry name" value="tRNA_edit"/>
    <property type="match status" value="1"/>
</dbReference>
<dbReference type="PIRSF" id="PIRSF001535">
    <property type="entry name" value="ProRS_1"/>
    <property type="match status" value="1"/>
</dbReference>
<dbReference type="PRINTS" id="PR01046">
    <property type="entry name" value="TRNASYNTHPRO"/>
</dbReference>
<dbReference type="SUPFAM" id="SSF52954">
    <property type="entry name" value="Class II aaRS ABD-related"/>
    <property type="match status" value="1"/>
</dbReference>
<dbReference type="SUPFAM" id="SSF55681">
    <property type="entry name" value="Class II aaRS and biotin synthetases"/>
    <property type="match status" value="1"/>
</dbReference>
<dbReference type="SUPFAM" id="SSF55826">
    <property type="entry name" value="YbaK/ProRS associated domain"/>
    <property type="match status" value="1"/>
</dbReference>
<dbReference type="PROSITE" id="PS50862">
    <property type="entry name" value="AA_TRNA_LIGASE_II"/>
    <property type="match status" value="1"/>
</dbReference>